<comment type="function">
    <text evidence="2 3">Catalyzes the hydrolysis of trehalose 6-phosphate to trehalose and phosphate; prevents the accumulation of toxic levels of trehalose 6-phosphate.</text>
</comment>
<comment type="catalytic activity">
    <reaction evidence="2">
        <text>alpha,alpha-trehalose 6-phosphate + H2O = alpha,alpha-trehalose + phosphate</text>
        <dbReference type="Rhea" id="RHEA:23420"/>
        <dbReference type="ChEBI" id="CHEBI:15377"/>
        <dbReference type="ChEBI" id="CHEBI:16551"/>
        <dbReference type="ChEBI" id="CHEBI:43474"/>
        <dbReference type="ChEBI" id="CHEBI:58429"/>
        <dbReference type="EC" id="3.1.3.12"/>
    </reaction>
</comment>
<comment type="cofactor">
    <cofactor evidence="1">
        <name>Mg(2+)</name>
        <dbReference type="ChEBI" id="CHEBI:18420"/>
    </cofactor>
    <text evidence="1">Binds 1 Mg(2+) ion per subunit.</text>
</comment>
<comment type="tissue specificity">
    <text>Ubiquitously expressed. Strong expression in intestine.</text>
</comment>
<comment type="developmental stage">
    <text evidence="2">Expression first seen at the 8E cell stage in the embryonic intestine. Expression continues to and includes adulthood. Beginning at the comma stage, additional expression is seen in the head and possibly in the hypodermis. By the twofold stage and continuing into adulthood, expression becomes increasingly widespread, with strong staining in the intestine, pharynx, hypodermis, body wall muscle, tail, and unidentified head neurons.</text>
</comment>
<comment type="disruption phenotype">
    <text evidence="2 3">Lethal at early larval stage. Mutant larvae show intestinal defects, and a high proportion exhibit gut obstruction (gob). No visible phenotype when gob-1 is down-regulated together with the trehalose phosphate synthases tps-1 and tps-2.</text>
</comment>
<comment type="similarity">
    <text evidence="5">Belongs to the gob-1 trehalose phosphatase family.</text>
</comment>
<comment type="sequence caution" evidence="5">
    <conflict type="erroneous initiation">
        <sequence resource="EMBL-CDS" id="CAB17072"/>
    </conflict>
    <text>Extended N-terminus.</text>
</comment>
<organism>
    <name type="scientific">Caenorhabditis elegans</name>
    <dbReference type="NCBI Taxonomy" id="6239"/>
    <lineage>
        <taxon>Eukaryota</taxon>
        <taxon>Metazoa</taxon>
        <taxon>Ecdysozoa</taxon>
        <taxon>Nematoda</taxon>
        <taxon>Chromadorea</taxon>
        <taxon>Rhabditida</taxon>
        <taxon>Rhabditina</taxon>
        <taxon>Rhabditomorpha</taxon>
        <taxon>Rhabditoidea</taxon>
        <taxon>Rhabditidae</taxon>
        <taxon>Peloderinae</taxon>
        <taxon>Caenorhabditis</taxon>
    </lineage>
</organism>
<dbReference type="EC" id="3.1.3.12" evidence="2"/>
<dbReference type="EMBL" id="BX284606">
    <property type="protein sequence ID" value="CAB17072.1"/>
    <property type="status" value="ALT_INIT"/>
    <property type="molecule type" value="Genomic_DNA"/>
</dbReference>
<dbReference type="EMBL" id="BX284606">
    <property type="protein sequence ID" value="CAC70091.2"/>
    <property type="molecule type" value="Genomic_DNA"/>
</dbReference>
<dbReference type="PIR" id="T23091">
    <property type="entry name" value="T23091"/>
</dbReference>
<dbReference type="RefSeq" id="NP_510559.1">
    <property type="nucleotide sequence ID" value="NM_078158.5"/>
</dbReference>
<dbReference type="RefSeq" id="NP_510560.2">
    <property type="nucleotide sequence ID" value="NM_078159.5"/>
</dbReference>
<dbReference type="SMR" id="Q9XTQ5"/>
<dbReference type="FunCoup" id="Q9XTQ5">
    <property type="interactions" value="248"/>
</dbReference>
<dbReference type="STRING" id="6239.H13N06.3a.1"/>
<dbReference type="PaxDb" id="6239-H13N06.3a"/>
<dbReference type="PeptideAtlas" id="Q9XTQ5"/>
<dbReference type="EnsemblMetazoa" id="H13N06.3.1">
    <property type="protein sequence ID" value="H13N06.3.1"/>
    <property type="gene ID" value="WBGene00001649"/>
</dbReference>
<dbReference type="GeneID" id="181637"/>
<dbReference type="KEGG" id="cel:CELE_H13N06.3"/>
<dbReference type="UCSC" id="H13N06.3a">
    <property type="organism name" value="c. elegans"/>
</dbReference>
<dbReference type="AGR" id="WB:WBGene00001649"/>
<dbReference type="CTD" id="181637"/>
<dbReference type="WormBase" id="H13N06.3">
    <property type="protein sequence ID" value="CE40416"/>
    <property type="gene ID" value="WBGene00001649"/>
    <property type="gene designation" value="gob-1"/>
</dbReference>
<dbReference type="eggNOG" id="ENOG502RY87">
    <property type="taxonomic scope" value="Eukaryota"/>
</dbReference>
<dbReference type="InParanoid" id="Q9XTQ5"/>
<dbReference type="OrthoDB" id="5781377at2759"/>
<dbReference type="PhylomeDB" id="Q9XTQ5"/>
<dbReference type="PRO" id="PR:Q9XTQ5"/>
<dbReference type="Proteomes" id="UP000001940">
    <property type="component" value="Chromosome X"/>
</dbReference>
<dbReference type="Bgee" id="WBGene00001649">
    <property type="expression patterns" value="Expressed in pharyngeal muscle cell (C elegans) and 3 other cell types or tissues"/>
</dbReference>
<dbReference type="GO" id="GO:0005737">
    <property type="term" value="C:cytoplasm"/>
    <property type="evidence" value="ECO:0000314"/>
    <property type="project" value="WormBase"/>
</dbReference>
<dbReference type="GO" id="GO:0046872">
    <property type="term" value="F:metal ion binding"/>
    <property type="evidence" value="ECO:0007669"/>
    <property type="project" value="UniProtKB-KW"/>
</dbReference>
<dbReference type="GO" id="GO:0004805">
    <property type="term" value="F:trehalose-phosphatase activity"/>
    <property type="evidence" value="ECO:0000314"/>
    <property type="project" value="UniProtKB"/>
</dbReference>
<dbReference type="GO" id="GO:1901136">
    <property type="term" value="P:carbohydrate derivative catabolic process"/>
    <property type="evidence" value="ECO:0000314"/>
    <property type="project" value="UniProtKB"/>
</dbReference>
<dbReference type="GO" id="GO:0016311">
    <property type="term" value="P:dephosphorylation"/>
    <property type="evidence" value="ECO:0000314"/>
    <property type="project" value="UniProtKB"/>
</dbReference>
<dbReference type="GO" id="GO:0005992">
    <property type="term" value="P:trehalose biosynthetic process"/>
    <property type="evidence" value="ECO:0000314"/>
    <property type="project" value="WormBase"/>
</dbReference>
<dbReference type="Gene3D" id="1.20.58.1800">
    <property type="match status" value="1"/>
</dbReference>
<dbReference type="Gene3D" id="3.30.70.3080">
    <property type="match status" value="1"/>
</dbReference>
<dbReference type="Gene3D" id="3.40.50.1000">
    <property type="entry name" value="HAD superfamily/HAD-like"/>
    <property type="match status" value="1"/>
</dbReference>
<dbReference type="InterPro" id="IPR036412">
    <property type="entry name" value="HAD-like_sf"/>
</dbReference>
<dbReference type="InterPro" id="IPR023214">
    <property type="entry name" value="HAD_sf"/>
</dbReference>
<dbReference type="InterPro" id="IPR049063">
    <property type="entry name" value="T6PP_C"/>
</dbReference>
<dbReference type="InterPro" id="IPR041064">
    <property type="entry name" value="T6PP_helical"/>
</dbReference>
<dbReference type="Pfam" id="PF21141">
    <property type="entry name" value="T6PP_C"/>
    <property type="match status" value="1"/>
</dbReference>
<dbReference type="Pfam" id="PF18572">
    <property type="entry name" value="T6PP_N"/>
    <property type="match status" value="1"/>
</dbReference>
<dbReference type="SUPFAM" id="SSF56784">
    <property type="entry name" value="HAD-like"/>
    <property type="match status" value="1"/>
</dbReference>
<accession>Q9XTQ5</accession>
<accession>Q95QD8</accession>
<sequence>MNCEKESQMTIASQSIEDFKECLYQMQEARKSVTNEILETGHIKADQVQIFKSTLEEMNDERTSKNHIRDIHSRGTTFGINIQDEIKGLQKDHHFLDAFAVESDKENNSFANVLKLCDLPGLLSKFVDDEIRFEKEVAECKAFLMDLIDTSTTGGIKPLFITDWDGTMKDYCSQYATNLQPAYSAIVMGVFSRLFTRAFAVLTAGPLRHPGILDLTALPINGPVLFSGSWGREWWLGGRRIVHDDGIPEEGSVAIGQLCEQLDEILHEGEFVQFALVGSGVQRKVDRLTLGVQTVFKQVPEDLSARYIDAVRERIHRVDPNSQYLVLENCSPLEIEVCVHSSGAVWNKGDGVAALVESLHDSLKVGKVCVAGDTASDVPMLKKAADENPENVRALFVNINKQLQENITNIVGDAKRVCFISSPDVAHAAFAQIISEFSG</sequence>
<keyword id="KW-0378">Hydrolase</keyword>
<keyword id="KW-0460">Magnesium</keyword>
<keyword id="KW-0479">Metal-binding</keyword>
<keyword id="KW-1185">Reference proteome</keyword>
<feature type="chain" id="PRO_0000450613" description="Trehalose-phosphatase">
    <location>
        <begin position="1"/>
        <end position="439"/>
    </location>
</feature>
<feature type="active site" description="Proton donor/acceptor" evidence="1">
    <location>
        <position position="165"/>
    </location>
</feature>
<feature type="binding site" evidence="1">
    <location>
        <position position="163"/>
    </location>
    <ligand>
        <name>Mg(2+)</name>
        <dbReference type="ChEBI" id="CHEBI:18420"/>
    </ligand>
</feature>
<feature type="binding site" evidence="1">
    <location>
        <position position="165"/>
    </location>
    <ligand>
        <name>Mg(2+)</name>
        <dbReference type="ChEBI" id="CHEBI:18420"/>
    </ligand>
</feature>
<feature type="binding site" evidence="1">
    <location>
        <begin position="282"/>
        <end position="284"/>
    </location>
    <ligand>
        <name>substrate</name>
    </ligand>
</feature>
<feature type="binding site" evidence="1">
    <location>
        <position position="373"/>
    </location>
    <ligand>
        <name>Mg(2+)</name>
        <dbReference type="ChEBI" id="CHEBI:18420"/>
    </ligand>
</feature>
<evidence type="ECO:0000250" key="1">
    <source>
        <dbReference type="UniProtKB" id="A8NS89"/>
    </source>
</evidence>
<evidence type="ECO:0000269" key="2">
    <source>
    </source>
</evidence>
<evidence type="ECO:0000269" key="3">
    <source>
    </source>
</evidence>
<evidence type="ECO:0000303" key="4">
    <source>
    </source>
</evidence>
<evidence type="ECO:0000305" key="5"/>
<evidence type="ECO:0000312" key="6">
    <source>
        <dbReference type="WormBase" id="H13N06.3"/>
    </source>
</evidence>
<reference key="1">
    <citation type="journal article" date="2005" name="Dev. Biol.">
        <title>The C. elegans lethal gut-obstructed gob-1 gene is trehalose-6-phosphate phosphatase.</title>
        <authorList>
            <person name="Kormish J.D."/>
            <person name="McGhee J.D."/>
        </authorList>
    </citation>
    <scope>NUCLEOTIDE SEQUENCE [MRNA]</scope>
    <scope>FUNCTION</scope>
    <scope>CATALYTIC ACTIVITY</scope>
    <scope>DEVELOPMENTAL STAGE</scope>
    <scope>DISRUPTION PHENOTYPE</scope>
    <source>
        <strain>Bristol N2</strain>
    </source>
</reference>
<reference key="2">
    <citation type="journal article" date="1998" name="Science">
        <title>Genome sequence of the nematode C. elegans: a platform for investigating biology.</title>
        <authorList>
            <consortium name="The C. elegans sequencing consortium"/>
        </authorList>
    </citation>
    <scope>NUCLEOTIDE SEQUENCE [LARGE SCALE GENOMIC DNA]</scope>
    <source>
        <strain>Bristol N2</strain>
    </source>
</reference>
<reference key="3">
    <citation type="journal article" date="2014" name="PLoS Pathog.">
        <title>Structure of the trehalose-6-phosphate phosphatase from Brugia malayi reveals key design principles for anthelmintic drugs.</title>
        <authorList>
            <person name="Farelli J.D."/>
            <person name="Galvin B.D."/>
            <person name="Li Z."/>
            <person name="Liu C."/>
            <person name="Aono M."/>
            <person name="Garland M."/>
            <person name="Hallett O.E."/>
            <person name="Causey T.B."/>
            <person name="Ali-Reynolds A."/>
            <person name="Saltzberg D.J."/>
            <person name="Carlow C.K."/>
            <person name="Dunaway-Mariano D."/>
            <person name="Allen K.N."/>
        </authorList>
    </citation>
    <scope>FUNCTION</scope>
    <scope>DISRUPTION PHENOTYPE</scope>
    <scope>CATALYTIC ACTIVITY</scope>
</reference>
<proteinExistence type="evidence at protein level"/>
<protein>
    <recommendedName>
        <fullName>Trehalose-phosphatase</fullName>
        <ecNumber evidence="2">3.1.3.12</ecNumber>
    </recommendedName>
    <alternativeName>
        <fullName evidence="4">Trehalose-6-phosphate phosphatase</fullName>
        <shortName>TPP</shortName>
    </alternativeName>
</protein>
<name>GOB1_CAEEL</name>
<gene>
    <name evidence="6" type="primary">gob-1</name>
    <name evidence="6" type="ORF">H13N06.3</name>
</gene>